<accession>Q10227</accession>
<organism>
    <name type="scientific">Schizosaccharomyces pombe (strain 972 / ATCC 24843)</name>
    <name type="common">Fission yeast</name>
    <dbReference type="NCBI Taxonomy" id="284812"/>
    <lineage>
        <taxon>Eukaryota</taxon>
        <taxon>Fungi</taxon>
        <taxon>Dikarya</taxon>
        <taxon>Ascomycota</taxon>
        <taxon>Taphrinomycotina</taxon>
        <taxon>Schizosaccharomycetes</taxon>
        <taxon>Schizosaccharomycetales</taxon>
        <taxon>Schizosaccharomycetaceae</taxon>
        <taxon>Schizosaccharomyces</taxon>
    </lineage>
</organism>
<dbReference type="EMBL" id="CU329670">
    <property type="protein sequence ID" value="CAA93547.1"/>
    <property type="molecule type" value="Genomic_DNA"/>
</dbReference>
<dbReference type="PIR" id="T38532">
    <property type="entry name" value="T38532"/>
</dbReference>
<dbReference type="RefSeq" id="NP_594847.1">
    <property type="nucleotide sequence ID" value="NM_001020276.2"/>
</dbReference>
<dbReference type="SMR" id="Q10227"/>
<dbReference type="BioGRID" id="278279">
    <property type="interactions" value="4"/>
</dbReference>
<dbReference type="FunCoup" id="Q10227">
    <property type="interactions" value="3"/>
</dbReference>
<dbReference type="iPTMnet" id="Q10227"/>
<dbReference type="SwissPalm" id="Q10227"/>
<dbReference type="PaxDb" id="4896-SPAC2E12.03c.1"/>
<dbReference type="EnsemblFungi" id="SPAC2E12.03c.1">
    <property type="protein sequence ID" value="SPAC2E12.03c.1:pep"/>
    <property type="gene ID" value="SPAC2E12.03c"/>
</dbReference>
<dbReference type="KEGG" id="spo:2541787"/>
<dbReference type="PomBase" id="SPAC2E12.03c"/>
<dbReference type="VEuPathDB" id="FungiDB:SPAC2E12.03c"/>
<dbReference type="eggNOG" id="KOG2913">
    <property type="taxonomic scope" value="Eukaryota"/>
</dbReference>
<dbReference type="HOGENOM" id="CLU_040201_4_0_1"/>
<dbReference type="InParanoid" id="Q10227"/>
<dbReference type="OMA" id="YYEKKWS"/>
<dbReference type="PhylomeDB" id="Q10227"/>
<dbReference type="PRO" id="PR:Q10227"/>
<dbReference type="Proteomes" id="UP000002485">
    <property type="component" value="Chromosome I"/>
</dbReference>
<dbReference type="GO" id="GO:0032153">
    <property type="term" value="C:cell division site"/>
    <property type="evidence" value="ECO:0007005"/>
    <property type="project" value="PomBase"/>
</dbReference>
<dbReference type="GO" id="GO:0051286">
    <property type="term" value="C:cell tip"/>
    <property type="evidence" value="ECO:0007005"/>
    <property type="project" value="PomBase"/>
</dbReference>
<dbReference type="GO" id="GO:0005794">
    <property type="term" value="C:Golgi apparatus"/>
    <property type="evidence" value="ECO:0007005"/>
    <property type="project" value="PomBase"/>
</dbReference>
<dbReference type="GO" id="GO:0016020">
    <property type="term" value="C:membrane"/>
    <property type="evidence" value="ECO:0000318"/>
    <property type="project" value="GO_Central"/>
</dbReference>
<dbReference type="GO" id="GO:0015174">
    <property type="term" value="F:basic amino acid transmembrane transporter activity"/>
    <property type="evidence" value="ECO:0000266"/>
    <property type="project" value="PomBase"/>
</dbReference>
<dbReference type="GO" id="GO:0003333">
    <property type="term" value="P:amino acid transmembrane transport"/>
    <property type="evidence" value="ECO:0000266"/>
    <property type="project" value="PomBase"/>
</dbReference>
<dbReference type="Gene3D" id="1.20.1280.290">
    <property type="match status" value="2"/>
</dbReference>
<dbReference type="InterPro" id="IPR051415">
    <property type="entry name" value="LAAT-1"/>
</dbReference>
<dbReference type="InterPro" id="IPR006603">
    <property type="entry name" value="PQ-loop_rpt"/>
</dbReference>
<dbReference type="PANTHER" id="PTHR16201:SF37">
    <property type="entry name" value="PQ-LOOP REPEAT-CONTAINING PROTEIN"/>
    <property type="match status" value="1"/>
</dbReference>
<dbReference type="PANTHER" id="PTHR16201">
    <property type="entry name" value="SEVEN TRANSMEMBRANE PROTEIN 1-RELATED"/>
    <property type="match status" value="1"/>
</dbReference>
<dbReference type="Pfam" id="PF04193">
    <property type="entry name" value="PQ-loop"/>
    <property type="match status" value="2"/>
</dbReference>
<dbReference type="SMART" id="SM00679">
    <property type="entry name" value="CTNS"/>
    <property type="match status" value="2"/>
</dbReference>
<feature type="chain" id="PRO_0000116563" description="Uncharacterized protein C2E12.03c">
    <location>
        <begin position="1"/>
        <end position="283"/>
    </location>
</feature>
<feature type="transmembrane region" description="Helical" evidence="1">
    <location>
        <begin position="19"/>
        <end position="39"/>
    </location>
</feature>
<feature type="transmembrane region" description="Helical" evidence="1">
    <location>
        <begin position="48"/>
        <end position="68"/>
    </location>
</feature>
<feature type="transmembrane region" description="Helical" evidence="1">
    <location>
        <begin position="108"/>
        <end position="128"/>
    </location>
</feature>
<feature type="transmembrane region" description="Helical" evidence="1">
    <location>
        <begin position="138"/>
        <end position="158"/>
    </location>
</feature>
<feature type="transmembrane region" description="Helical" evidence="1">
    <location>
        <begin position="170"/>
        <end position="190"/>
    </location>
</feature>
<feature type="transmembrane region" description="Helical" evidence="1">
    <location>
        <begin position="206"/>
        <end position="226"/>
    </location>
</feature>
<feature type="domain" description="PQ-loop 1">
    <location>
        <begin position="15"/>
        <end position="81"/>
    </location>
</feature>
<feature type="domain" description="PQ-loop 2">
    <location>
        <begin position="149"/>
        <end position="204"/>
    </location>
</feature>
<feature type="glycosylation site" description="N-linked (GlcNAc...) asparagine" evidence="1">
    <location>
        <position position="15"/>
    </location>
</feature>
<feature type="glycosylation site" description="N-linked (GlcNAc...) asparagine" evidence="1">
    <location>
        <position position="228"/>
    </location>
</feature>
<name>YD03_SCHPO</name>
<gene>
    <name type="ORF">SPAC2E12.03c</name>
</gene>
<comment type="subcellular location">
    <subcellularLocation>
        <location evidence="2">Membrane</location>
        <topology evidence="2">Multi-pass membrane protein</topology>
    </subcellularLocation>
</comment>
<evidence type="ECO:0000255" key="1"/>
<evidence type="ECO:0000305" key="2"/>
<proteinExistence type="predicted"/>
<reference key="1">
    <citation type="journal article" date="2002" name="Nature">
        <title>The genome sequence of Schizosaccharomyces pombe.</title>
        <authorList>
            <person name="Wood V."/>
            <person name="Gwilliam R."/>
            <person name="Rajandream M.A."/>
            <person name="Lyne M.H."/>
            <person name="Lyne R."/>
            <person name="Stewart A."/>
            <person name="Sgouros J.G."/>
            <person name="Peat N."/>
            <person name="Hayles J."/>
            <person name="Baker S.G."/>
            <person name="Basham D."/>
            <person name="Bowman S."/>
            <person name="Brooks K."/>
            <person name="Brown D."/>
            <person name="Brown S."/>
            <person name="Chillingworth T."/>
            <person name="Churcher C.M."/>
            <person name="Collins M."/>
            <person name="Connor R."/>
            <person name="Cronin A."/>
            <person name="Davis P."/>
            <person name="Feltwell T."/>
            <person name="Fraser A."/>
            <person name="Gentles S."/>
            <person name="Goble A."/>
            <person name="Hamlin N."/>
            <person name="Harris D.E."/>
            <person name="Hidalgo J."/>
            <person name="Hodgson G."/>
            <person name="Holroyd S."/>
            <person name="Hornsby T."/>
            <person name="Howarth S."/>
            <person name="Huckle E.J."/>
            <person name="Hunt S."/>
            <person name="Jagels K."/>
            <person name="James K.D."/>
            <person name="Jones L."/>
            <person name="Jones M."/>
            <person name="Leather S."/>
            <person name="McDonald S."/>
            <person name="McLean J."/>
            <person name="Mooney P."/>
            <person name="Moule S."/>
            <person name="Mungall K.L."/>
            <person name="Murphy L.D."/>
            <person name="Niblett D."/>
            <person name="Odell C."/>
            <person name="Oliver K."/>
            <person name="O'Neil S."/>
            <person name="Pearson D."/>
            <person name="Quail M.A."/>
            <person name="Rabbinowitsch E."/>
            <person name="Rutherford K.M."/>
            <person name="Rutter S."/>
            <person name="Saunders D."/>
            <person name="Seeger K."/>
            <person name="Sharp S."/>
            <person name="Skelton J."/>
            <person name="Simmonds M.N."/>
            <person name="Squares R."/>
            <person name="Squares S."/>
            <person name="Stevens K."/>
            <person name="Taylor K."/>
            <person name="Taylor R.G."/>
            <person name="Tivey A."/>
            <person name="Walsh S.V."/>
            <person name="Warren T."/>
            <person name="Whitehead S."/>
            <person name="Woodward J.R."/>
            <person name="Volckaert G."/>
            <person name="Aert R."/>
            <person name="Robben J."/>
            <person name="Grymonprez B."/>
            <person name="Weltjens I."/>
            <person name="Vanstreels E."/>
            <person name="Rieger M."/>
            <person name="Schaefer M."/>
            <person name="Mueller-Auer S."/>
            <person name="Gabel C."/>
            <person name="Fuchs M."/>
            <person name="Duesterhoeft A."/>
            <person name="Fritzc C."/>
            <person name="Holzer E."/>
            <person name="Moestl D."/>
            <person name="Hilbert H."/>
            <person name="Borzym K."/>
            <person name="Langer I."/>
            <person name="Beck A."/>
            <person name="Lehrach H."/>
            <person name="Reinhardt R."/>
            <person name="Pohl T.M."/>
            <person name="Eger P."/>
            <person name="Zimmermann W."/>
            <person name="Wedler H."/>
            <person name="Wambutt R."/>
            <person name="Purnelle B."/>
            <person name="Goffeau A."/>
            <person name="Cadieu E."/>
            <person name="Dreano S."/>
            <person name="Gloux S."/>
            <person name="Lelaure V."/>
            <person name="Mottier S."/>
            <person name="Galibert F."/>
            <person name="Aves S.J."/>
            <person name="Xiang Z."/>
            <person name="Hunt C."/>
            <person name="Moore K."/>
            <person name="Hurst S.M."/>
            <person name="Lucas M."/>
            <person name="Rochet M."/>
            <person name="Gaillardin C."/>
            <person name="Tallada V.A."/>
            <person name="Garzon A."/>
            <person name="Thode G."/>
            <person name="Daga R.R."/>
            <person name="Cruzado L."/>
            <person name="Jimenez J."/>
            <person name="Sanchez M."/>
            <person name="del Rey F."/>
            <person name="Benito J."/>
            <person name="Dominguez A."/>
            <person name="Revuelta J.L."/>
            <person name="Moreno S."/>
            <person name="Armstrong J."/>
            <person name="Forsburg S.L."/>
            <person name="Cerutti L."/>
            <person name="Lowe T."/>
            <person name="McCombie W.R."/>
            <person name="Paulsen I."/>
            <person name="Potashkin J."/>
            <person name="Shpakovski G.V."/>
            <person name="Ussery D."/>
            <person name="Barrell B.G."/>
            <person name="Nurse P."/>
        </authorList>
    </citation>
    <scope>NUCLEOTIDE SEQUENCE [LARGE SCALE GENOMIC DNA]</scope>
    <source>
        <strain>972 / ATCC 24843</strain>
    </source>
</reference>
<sequence length="283" mass="31633">MPSSTTTAPPGTHPNATASTVFAILGTVCWCVQLIPQIIKNYRAKSTEGLDTLFILSWVVASIPLSVYNQVQELNIALKVQPELFQALAFTTFFQCLYYGSKWPLRKALFVVISFMLFSGGLQAMLILTIKLGIRRHVEWPVVFMGVLATVLVNIGFLPQYISIFRARAVTGISYLFLAIDSSGSLFSFLSLPFDRWDVLAAVDYGLLFIIEMGVFVLAFIFNVLLKNKSTPTDEDVTFTEEDGDEKDEEYSDIFSIKGKFNTRPNAWQNAYDSDTKSAIQIP</sequence>
<keyword id="KW-0325">Glycoprotein</keyword>
<keyword id="KW-0472">Membrane</keyword>
<keyword id="KW-1185">Reference proteome</keyword>
<keyword id="KW-0677">Repeat</keyword>
<keyword id="KW-0812">Transmembrane</keyword>
<keyword id="KW-1133">Transmembrane helix</keyword>
<protein>
    <recommendedName>
        <fullName>Uncharacterized protein C2E12.03c</fullName>
    </recommendedName>
</protein>